<protein>
    <recommendedName>
        <fullName>Flagellar filament core protein flaB2</fullName>
    </recommendedName>
    <alternativeName>
        <fullName>34 kDa core protein</fullName>
    </alternativeName>
</protein>
<sequence>MIINNNISAINAQRTLKFRNVDLSKDMAALSSGMRINRAGDDASGLAVSEKMRTQIRGLRQAERNNSSGISFIQTTEGYLQESQDILQRIRELAVQSANGIYTDADRMLIQVEVSQLVDEVNRIASHAQFNTLNMLTGRFSNPNEGGAPVASMWFHIGANMDERRRVYIGTMTAAALGLQTAEGTGISISSIDKANSAIGIVDEALTKVSKQRSNLPAYQNRLELTAQGLMIAYENTAASESRIRDTDMAETSVKFAKDQILSQANLAMLAQANTMNQGALRLIQ</sequence>
<reference key="1">
    <citation type="journal article" date="1993" name="J. Gen. Microbiol.">
        <title>Molecular analysis of a flagellar core protein gene of Serpulina (Treponema) hyodysenteriae.</title>
        <authorList>
            <person name="Koopman M.B.H."/>
            <person name="Baats E."/>
            <person name="de Leeuw O.S."/>
            <person name="van der Zeijst B.A.M."/>
            <person name="Kusters J.G."/>
        </authorList>
    </citation>
    <scope>NUCLEOTIDE SEQUENCE [GENOMIC DNA]</scope>
    <source>
        <strain>C5</strain>
    </source>
</reference>
<reference key="2">
    <citation type="journal article" date="1992" name="J. Gen. Microbiol.">
        <title>The periplasmic flagella of Serpulina (Treponema) hyodysenteriae are composed of two sheath proteins and three core proteins.</title>
        <authorList>
            <person name="Koopman M.B.H."/>
            <person name="Baats E."/>
            <person name="van Vorstenbosch C.J.A.H.V."/>
            <person name="van der Zeijst B.A.M."/>
            <person name="Kusters J.G."/>
        </authorList>
    </citation>
    <scope>PROTEIN SEQUENCE OF 1-25</scope>
    <source>
        <strain>C5</strain>
    </source>
</reference>
<name>FLAB2_BRAHO</name>
<gene>
    <name type="primary">flaB2</name>
</gene>
<organism>
    <name type="scientific">Brachyspira hyodysenteriae</name>
    <name type="common">Treponema hyodysenteriae</name>
    <dbReference type="NCBI Taxonomy" id="159"/>
    <lineage>
        <taxon>Bacteria</taxon>
        <taxon>Pseudomonadati</taxon>
        <taxon>Spirochaetota</taxon>
        <taxon>Spirochaetia</taxon>
        <taxon>Brachyspirales</taxon>
        <taxon>Brachyspiraceae</taxon>
        <taxon>Brachyspira</taxon>
    </lineage>
</organism>
<accession>P80160</accession>
<dbReference type="EMBL" id="X63513">
    <property type="protein sequence ID" value="CAA45081.1"/>
    <property type="molecule type" value="Genomic_DNA"/>
</dbReference>
<dbReference type="SMR" id="P80160"/>
<dbReference type="GO" id="GO:0055040">
    <property type="term" value="C:periplasmic flagellum"/>
    <property type="evidence" value="ECO:0007669"/>
    <property type="project" value="UniProtKB-SubCell"/>
</dbReference>
<dbReference type="GO" id="GO:0005198">
    <property type="term" value="F:structural molecule activity"/>
    <property type="evidence" value="ECO:0007669"/>
    <property type="project" value="InterPro"/>
</dbReference>
<dbReference type="Gene3D" id="1.20.1330.10">
    <property type="entry name" value="f41 fragment of flagellin, N-terminal domain"/>
    <property type="match status" value="2"/>
</dbReference>
<dbReference type="Gene3D" id="6.10.10.10">
    <property type="entry name" value="Flagellar export chaperone, C-terminal domain"/>
    <property type="match status" value="1"/>
</dbReference>
<dbReference type="InterPro" id="IPR001492">
    <property type="entry name" value="Flagellin"/>
</dbReference>
<dbReference type="InterPro" id="IPR046358">
    <property type="entry name" value="Flagellin_C"/>
</dbReference>
<dbReference type="InterPro" id="IPR042187">
    <property type="entry name" value="Flagellin_C_sub2"/>
</dbReference>
<dbReference type="InterPro" id="IPR001029">
    <property type="entry name" value="Flagellin_N"/>
</dbReference>
<dbReference type="PANTHER" id="PTHR42792">
    <property type="entry name" value="FLAGELLIN"/>
    <property type="match status" value="1"/>
</dbReference>
<dbReference type="PANTHER" id="PTHR42792:SF2">
    <property type="entry name" value="FLAGELLIN"/>
    <property type="match status" value="1"/>
</dbReference>
<dbReference type="Pfam" id="PF00700">
    <property type="entry name" value="Flagellin_C"/>
    <property type="match status" value="1"/>
</dbReference>
<dbReference type="Pfam" id="PF00669">
    <property type="entry name" value="Flagellin_N"/>
    <property type="match status" value="1"/>
</dbReference>
<dbReference type="PRINTS" id="PR00207">
    <property type="entry name" value="FLAGELLIN"/>
</dbReference>
<dbReference type="SUPFAM" id="SSF64518">
    <property type="entry name" value="Phase 1 flagellin"/>
    <property type="match status" value="1"/>
</dbReference>
<proteinExistence type="evidence at protein level"/>
<evidence type="ECO:0000305" key="1"/>
<comment type="function">
    <text>Component of the core of the flagella.</text>
</comment>
<comment type="subunit">
    <text>The flagellum consists of an outer layer composed of two sheath proteins, flaA1 (44 kDa) and flaA2 (35 kDa) around a core that contains three proteins flaB1 (37 kDa), flaB2 (34 kDa) and flaB3 (32 kDa).</text>
</comment>
<comment type="subcellular location">
    <subcellularLocation>
        <location>Periplasmic flagellum</location>
    </subcellularLocation>
    <subcellularLocation>
        <location>Periplasm</location>
    </subcellularLocation>
</comment>
<comment type="similarity">
    <text evidence="1">Belongs to the bacterial flagellin family.</text>
</comment>
<feature type="chain" id="PRO_0000182638" description="Flagellar filament core protein flaB2">
    <location>
        <begin position="1"/>
        <end position="285"/>
    </location>
</feature>
<feature type="sequence conflict" description="In Ref. 2; AA sequence." evidence="1" ref="2">
    <original>K</original>
    <variation>R</variation>
    <location>
        <position position="25"/>
    </location>
</feature>
<keyword id="KW-0975">Bacterial flagellum</keyword>
<keyword id="KW-0903">Direct protein sequencing</keyword>
<keyword id="KW-0574">Periplasm</keyword>